<dbReference type="EC" id="3.6.4.-" evidence="1"/>
<dbReference type="EMBL" id="CP000034">
    <property type="protein sequence ID" value="ABB61304.1"/>
    <property type="molecule type" value="Genomic_DNA"/>
</dbReference>
<dbReference type="RefSeq" id="WP_000568519.1">
    <property type="nucleotide sequence ID" value="NC_007606.1"/>
</dbReference>
<dbReference type="RefSeq" id="YP_402795.1">
    <property type="nucleotide sequence ID" value="NC_007606.1"/>
</dbReference>
<dbReference type="SMR" id="Q32HA1"/>
<dbReference type="STRING" id="300267.SDY_1147"/>
<dbReference type="EnsemblBacteria" id="ABB61304">
    <property type="protein sequence ID" value="ABB61304"/>
    <property type="gene ID" value="SDY_1147"/>
</dbReference>
<dbReference type="GeneID" id="75202735"/>
<dbReference type="KEGG" id="sdy:SDY_1147"/>
<dbReference type="PATRIC" id="fig|300267.13.peg.1350"/>
<dbReference type="HOGENOM" id="CLU_055599_1_0_6"/>
<dbReference type="Proteomes" id="UP000002716">
    <property type="component" value="Chromosome"/>
</dbReference>
<dbReference type="GO" id="GO:0005737">
    <property type="term" value="C:cytoplasm"/>
    <property type="evidence" value="ECO:0007669"/>
    <property type="project" value="UniProtKB-SubCell"/>
</dbReference>
<dbReference type="GO" id="GO:0048476">
    <property type="term" value="C:Holliday junction resolvase complex"/>
    <property type="evidence" value="ECO:0007669"/>
    <property type="project" value="UniProtKB-UniRule"/>
</dbReference>
<dbReference type="GO" id="GO:0005524">
    <property type="term" value="F:ATP binding"/>
    <property type="evidence" value="ECO:0007669"/>
    <property type="project" value="UniProtKB-UniRule"/>
</dbReference>
<dbReference type="GO" id="GO:0016887">
    <property type="term" value="F:ATP hydrolysis activity"/>
    <property type="evidence" value="ECO:0007669"/>
    <property type="project" value="InterPro"/>
</dbReference>
<dbReference type="GO" id="GO:0000400">
    <property type="term" value="F:four-way junction DNA binding"/>
    <property type="evidence" value="ECO:0007669"/>
    <property type="project" value="UniProtKB-UniRule"/>
</dbReference>
<dbReference type="GO" id="GO:0009378">
    <property type="term" value="F:four-way junction helicase activity"/>
    <property type="evidence" value="ECO:0007669"/>
    <property type="project" value="InterPro"/>
</dbReference>
<dbReference type="GO" id="GO:0006310">
    <property type="term" value="P:DNA recombination"/>
    <property type="evidence" value="ECO:0007669"/>
    <property type="project" value="UniProtKB-UniRule"/>
</dbReference>
<dbReference type="GO" id="GO:0006281">
    <property type="term" value="P:DNA repair"/>
    <property type="evidence" value="ECO:0007669"/>
    <property type="project" value="UniProtKB-UniRule"/>
</dbReference>
<dbReference type="CDD" id="cd00009">
    <property type="entry name" value="AAA"/>
    <property type="match status" value="1"/>
</dbReference>
<dbReference type="FunFam" id="1.10.10.10:FF:000086">
    <property type="entry name" value="Holliday junction ATP-dependent DNA helicase RuvB"/>
    <property type="match status" value="1"/>
</dbReference>
<dbReference type="FunFam" id="1.10.8.60:FF:000023">
    <property type="entry name" value="Holliday junction ATP-dependent DNA helicase RuvB"/>
    <property type="match status" value="1"/>
</dbReference>
<dbReference type="FunFam" id="3.40.50.300:FF:000073">
    <property type="entry name" value="Holliday junction ATP-dependent DNA helicase RuvB"/>
    <property type="match status" value="1"/>
</dbReference>
<dbReference type="Gene3D" id="1.10.8.60">
    <property type="match status" value="1"/>
</dbReference>
<dbReference type="Gene3D" id="3.40.50.300">
    <property type="entry name" value="P-loop containing nucleotide triphosphate hydrolases"/>
    <property type="match status" value="1"/>
</dbReference>
<dbReference type="Gene3D" id="1.10.10.10">
    <property type="entry name" value="Winged helix-like DNA-binding domain superfamily/Winged helix DNA-binding domain"/>
    <property type="match status" value="1"/>
</dbReference>
<dbReference type="HAMAP" id="MF_00016">
    <property type="entry name" value="DNA_HJ_migration_RuvB"/>
    <property type="match status" value="1"/>
</dbReference>
<dbReference type="InterPro" id="IPR003593">
    <property type="entry name" value="AAA+_ATPase"/>
</dbReference>
<dbReference type="InterPro" id="IPR041445">
    <property type="entry name" value="AAA_lid_4"/>
</dbReference>
<dbReference type="InterPro" id="IPR004605">
    <property type="entry name" value="DNA_helicase_Holl-junc_RuvB"/>
</dbReference>
<dbReference type="InterPro" id="IPR027417">
    <property type="entry name" value="P-loop_NTPase"/>
</dbReference>
<dbReference type="InterPro" id="IPR008824">
    <property type="entry name" value="RuvB-like_N"/>
</dbReference>
<dbReference type="InterPro" id="IPR008823">
    <property type="entry name" value="RuvB_C"/>
</dbReference>
<dbReference type="InterPro" id="IPR036388">
    <property type="entry name" value="WH-like_DNA-bd_sf"/>
</dbReference>
<dbReference type="InterPro" id="IPR036390">
    <property type="entry name" value="WH_DNA-bd_sf"/>
</dbReference>
<dbReference type="NCBIfam" id="NF000868">
    <property type="entry name" value="PRK00080.1"/>
    <property type="match status" value="1"/>
</dbReference>
<dbReference type="NCBIfam" id="TIGR00635">
    <property type="entry name" value="ruvB"/>
    <property type="match status" value="1"/>
</dbReference>
<dbReference type="PANTHER" id="PTHR42848">
    <property type="match status" value="1"/>
</dbReference>
<dbReference type="PANTHER" id="PTHR42848:SF1">
    <property type="entry name" value="HOLLIDAY JUNCTION BRANCH MIGRATION COMPLEX SUBUNIT RUVB"/>
    <property type="match status" value="1"/>
</dbReference>
<dbReference type="Pfam" id="PF17864">
    <property type="entry name" value="AAA_lid_4"/>
    <property type="match status" value="1"/>
</dbReference>
<dbReference type="Pfam" id="PF05491">
    <property type="entry name" value="RuvB_C"/>
    <property type="match status" value="1"/>
</dbReference>
<dbReference type="Pfam" id="PF05496">
    <property type="entry name" value="RuvB_N"/>
    <property type="match status" value="1"/>
</dbReference>
<dbReference type="SMART" id="SM00382">
    <property type="entry name" value="AAA"/>
    <property type="match status" value="1"/>
</dbReference>
<dbReference type="SUPFAM" id="SSF52540">
    <property type="entry name" value="P-loop containing nucleoside triphosphate hydrolases"/>
    <property type="match status" value="1"/>
</dbReference>
<dbReference type="SUPFAM" id="SSF46785">
    <property type="entry name" value="Winged helix' DNA-binding domain"/>
    <property type="match status" value="1"/>
</dbReference>
<sequence length="336" mass="37174">MIEADRLISAGTTLPEDVADRAIRPKLLEEYVGQPQVRSQMEIFIKAAKLRGDALDHLLIFGPPGLGKTTLANIVANEMGVNLRTTSGPVLEKAGDLAAMLTNLEPHDVLFIDEIHRLSPVVEEVLYPAMEDYQLDIMIGEGPAARSIKIDLPPFTLIGATTRAGSLTSPLRDRFGIVQRLEFYQVPDLQYIVSRSARFMGLEMSDDGALEVARRARGTPRIANRLLRRVRDFAEVKHDGTISADIAAQALDMLNVDAEGFDYMDRKLLLAVIDKFFGGPVGLDNLAAAIGEERETIEDVLEPYLIQQGFLQRTPRGRMATTRAWNHFGITPPEMP</sequence>
<proteinExistence type="inferred from homology"/>
<feature type="chain" id="PRO_0000235404" description="Holliday junction branch migration complex subunit RuvB">
    <location>
        <begin position="1"/>
        <end position="336"/>
    </location>
</feature>
<feature type="region of interest" description="Large ATPase domain (RuvB-L)" evidence="1">
    <location>
        <begin position="4"/>
        <end position="184"/>
    </location>
</feature>
<feature type="region of interest" description="Small ATPAse domain (RuvB-S)" evidence="1">
    <location>
        <begin position="185"/>
        <end position="255"/>
    </location>
</feature>
<feature type="region of interest" description="Head domain (RuvB-H)" evidence="1">
    <location>
        <begin position="258"/>
        <end position="336"/>
    </location>
</feature>
<feature type="binding site" evidence="1">
    <location>
        <position position="23"/>
    </location>
    <ligand>
        <name>ATP</name>
        <dbReference type="ChEBI" id="CHEBI:30616"/>
    </ligand>
</feature>
<feature type="binding site" evidence="1">
    <location>
        <position position="24"/>
    </location>
    <ligand>
        <name>ATP</name>
        <dbReference type="ChEBI" id="CHEBI:30616"/>
    </ligand>
</feature>
<feature type="binding site" evidence="1">
    <location>
        <position position="65"/>
    </location>
    <ligand>
        <name>ATP</name>
        <dbReference type="ChEBI" id="CHEBI:30616"/>
    </ligand>
</feature>
<feature type="binding site" evidence="1">
    <location>
        <position position="68"/>
    </location>
    <ligand>
        <name>ATP</name>
        <dbReference type="ChEBI" id="CHEBI:30616"/>
    </ligand>
</feature>
<feature type="binding site" evidence="1">
    <location>
        <position position="69"/>
    </location>
    <ligand>
        <name>ATP</name>
        <dbReference type="ChEBI" id="CHEBI:30616"/>
    </ligand>
</feature>
<feature type="binding site" evidence="1">
    <location>
        <position position="69"/>
    </location>
    <ligand>
        <name>Mg(2+)</name>
        <dbReference type="ChEBI" id="CHEBI:18420"/>
    </ligand>
</feature>
<feature type="binding site" evidence="1">
    <location>
        <position position="70"/>
    </location>
    <ligand>
        <name>ATP</name>
        <dbReference type="ChEBI" id="CHEBI:30616"/>
    </ligand>
</feature>
<feature type="binding site" evidence="1">
    <location>
        <begin position="131"/>
        <end position="133"/>
    </location>
    <ligand>
        <name>ATP</name>
        <dbReference type="ChEBI" id="CHEBI:30616"/>
    </ligand>
</feature>
<feature type="binding site" evidence="1">
    <location>
        <position position="174"/>
    </location>
    <ligand>
        <name>ATP</name>
        <dbReference type="ChEBI" id="CHEBI:30616"/>
    </ligand>
</feature>
<feature type="binding site" evidence="1">
    <location>
        <position position="184"/>
    </location>
    <ligand>
        <name>ATP</name>
        <dbReference type="ChEBI" id="CHEBI:30616"/>
    </ligand>
</feature>
<feature type="binding site" evidence="1">
    <location>
        <position position="221"/>
    </location>
    <ligand>
        <name>ATP</name>
        <dbReference type="ChEBI" id="CHEBI:30616"/>
    </ligand>
</feature>
<feature type="binding site" evidence="1">
    <location>
        <position position="294"/>
    </location>
    <ligand>
        <name>DNA</name>
        <dbReference type="ChEBI" id="CHEBI:16991"/>
    </ligand>
</feature>
<feature type="binding site" evidence="1">
    <location>
        <position position="313"/>
    </location>
    <ligand>
        <name>DNA</name>
        <dbReference type="ChEBI" id="CHEBI:16991"/>
    </ligand>
</feature>
<feature type="binding site" evidence="1">
    <location>
        <position position="318"/>
    </location>
    <ligand>
        <name>DNA</name>
        <dbReference type="ChEBI" id="CHEBI:16991"/>
    </ligand>
</feature>
<organism>
    <name type="scientific">Shigella dysenteriae serotype 1 (strain Sd197)</name>
    <dbReference type="NCBI Taxonomy" id="300267"/>
    <lineage>
        <taxon>Bacteria</taxon>
        <taxon>Pseudomonadati</taxon>
        <taxon>Pseudomonadota</taxon>
        <taxon>Gammaproteobacteria</taxon>
        <taxon>Enterobacterales</taxon>
        <taxon>Enterobacteriaceae</taxon>
        <taxon>Shigella</taxon>
    </lineage>
</organism>
<reference key="1">
    <citation type="journal article" date="2005" name="Nucleic Acids Res.">
        <title>Genome dynamics and diversity of Shigella species, the etiologic agents of bacillary dysentery.</title>
        <authorList>
            <person name="Yang F."/>
            <person name="Yang J."/>
            <person name="Zhang X."/>
            <person name="Chen L."/>
            <person name="Jiang Y."/>
            <person name="Yan Y."/>
            <person name="Tang X."/>
            <person name="Wang J."/>
            <person name="Xiong Z."/>
            <person name="Dong J."/>
            <person name="Xue Y."/>
            <person name="Zhu Y."/>
            <person name="Xu X."/>
            <person name="Sun L."/>
            <person name="Chen S."/>
            <person name="Nie H."/>
            <person name="Peng J."/>
            <person name="Xu J."/>
            <person name="Wang Y."/>
            <person name="Yuan Z."/>
            <person name="Wen Y."/>
            <person name="Yao Z."/>
            <person name="Shen Y."/>
            <person name="Qiang B."/>
            <person name="Hou Y."/>
            <person name="Yu J."/>
            <person name="Jin Q."/>
        </authorList>
    </citation>
    <scope>NUCLEOTIDE SEQUENCE [LARGE SCALE GENOMIC DNA]</scope>
    <source>
        <strain>Sd197</strain>
    </source>
</reference>
<evidence type="ECO:0000255" key="1">
    <source>
        <dbReference type="HAMAP-Rule" id="MF_00016"/>
    </source>
</evidence>
<comment type="function">
    <text evidence="1">The RuvA-RuvB-RuvC complex processes Holliday junction (HJ) DNA during genetic recombination and DNA repair, while the RuvA-RuvB complex plays an important role in the rescue of blocked DNA replication forks via replication fork reversal (RFR). RuvA specifically binds to HJ cruciform DNA, conferring on it an open structure. The RuvB hexamer acts as an ATP-dependent pump, pulling dsDNA into and through the RuvAB complex. RuvB forms 2 homohexamers on either side of HJ DNA bound by 1 or 2 RuvA tetramers; 4 subunits per hexamer contact DNA at a time. Coordinated motions by a converter formed by DNA-disengaged RuvB subunits stimulates ATP hydrolysis and nucleotide exchange. Immobilization of the converter enables RuvB to convert the ATP-contained energy into a lever motion, pulling 2 nucleotides of DNA out of the RuvA tetramer per ATP hydrolyzed, thus driving DNA branch migration. The RuvB motors rotate together with the DNA substrate, which together with the progressing nucleotide cycle form the mechanistic basis for DNA recombination by continuous HJ branch migration. Branch migration allows RuvC to scan DNA until it finds its consensus sequence, where it cleaves and resolves cruciform DNA.</text>
</comment>
<comment type="catalytic activity">
    <reaction evidence="1">
        <text>ATP + H2O = ADP + phosphate + H(+)</text>
        <dbReference type="Rhea" id="RHEA:13065"/>
        <dbReference type="ChEBI" id="CHEBI:15377"/>
        <dbReference type="ChEBI" id="CHEBI:15378"/>
        <dbReference type="ChEBI" id="CHEBI:30616"/>
        <dbReference type="ChEBI" id="CHEBI:43474"/>
        <dbReference type="ChEBI" id="CHEBI:456216"/>
    </reaction>
</comment>
<comment type="subunit">
    <text evidence="1">Homohexamer. Forms an RuvA(8)-RuvB(12)-Holliday junction (HJ) complex. HJ DNA is sandwiched between 2 RuvA tetramers; dsDNA enters through RuvA and exits via RuvB. An RuvB hexamer assembles on each DNA strand where it exits the tetramer. Each RuvB hexamer is contacted by two RuvA subunits (via domain III) on 2 adjacent RuvB subunits; this complex drives branch migration. In the full resolvosome a probable DNA-RuvA(4)-RuvB(12)-RuvC(2) complex forms which resolves the HJ.</text>
</comment>
<comment type="subcellular location">
    <subcellularLocation>
        <location evidence="1">Cytoplasm</location>
    </subcellularLocation>
</comment>
<comment type="domain">
    <text evidence="1">Has 3 domains, the large (RuvB-L) and small ATPase (RuvB-S) domains and the C-terminal head (RuvB-H) domain. The head domain binds DNA, while the ATPase domains jointly bind ATP, ADP or are empty depending on the state of the subunit in the translocation cycle. During a single DNA translocation step the structure of each domain remains the same, but their relative positions change.</text>
</comment>
<comment type="similarity">
    <text evidence="1">Belongs to the RuvB family.</text>
</comment>
<accession>Q32HA1</accession>
<name>RUVB_SHIDS</name>
<gene>
    <name evidence="1" type="primary">ruvB</name>
    <name type="ordered locus">SDY_1147</name>
</gene>
<protein>
    <recommendedName>
        <fullName evidence="1">Holliday junction branch migration complex subunit RuvB</fullName>
        <ecNumber evidence="1">3.6.4.-</ecNumber>
    </recommendedName>
</protein>
<keyword id="KW-0067">ATP-binding</keyword>
<keyword id="KW-0963">Cytoplasm</keyword>
<keyword id="KW-0227">DNA damage</keyword>
<keyword id="KW-0233">DNA recombination</keyword>
<keyword id="KW-0234">DNA repair</keyword>
<keyword id="KW-0238">DNA-binding</keyword>
<keyword id="KW-0378">Hydrolase</keyword>
<keyword id="KW-0547">Nucleotide-binding</keyword>
<keyword id="KW-1185">Reference proteome</keyword>